<reference key="1">
    <citation type="journal article" date="2005" name="Arch. Microbiol.">
        <title>The genome sequence of an anaerobic aromatic-degrading denitrifying bacterium, strain EbN1.</title>
        <authorList>
            <person name="Rabus R."/>
            <person name="Kube M."/>
            <person name="Heider J."/>
            <person name="Beck A."/>
            <person name="Heitmann K."/>
            <person name="Widdel F."/>
            <person name="Reinhardt R."/>
        </authorList>
    </citation>
    <scope>NUCLEOTIDE SEQUENCE [LARGE SCALE GENOMIC DNA]</scope>
    <source>
        <strain>DSM 19018 / LMG 30748 / EbN1</strain>
    </source>
</reference>
<protein>
    <recommendedName>
        <fullName evidence="1">Small ribosomal subunit protein uS10</fullName>
    </recommendedName>
    <alternativeName>
        <fullName evidence="2">30S ribosomal protein S10</fullName>
    </alternativeName>
</protein>
<keyword id="KW-1185">Reference proteome</keyword>
<keyword id="KW-0687">Ribonucleoprotein</keyword>
<keyword id="KW-0689">Ribosomal protein</keyword>
<gene>
    <name evidence="1" type="primary">rpsJ</name>
    <name type="ordered locus">AZOSEA21560</name>
    <name type="ORF">ebB124</name>
</gene>
<name>RS10_AROAE</name>
<sequence>MQNQKIRIRLKAFDYRLIDQSALEIVDTAKRTGAVVRGPVPLPTRIERFDLLRSPHVNKASRDQFEIRTHQRLMDIIDPTDKTVDALMKLDLPAGVDVEIKLQ</sequence>
<organism>
    <name type="scientific">Aromatoleum aromaticum (strain DSM 19018 / LMG 30748 / EbN1)</name>
    <name type="common">Azoarcus sp. (strain EbN1)</name>
    <dbReference type="NCBI Taxonomy" id="76114"/>
    <lineage>
        <taxon>Bacteria</taxon>
        <taxon>Pseudomonadati</taxon>
        <taxon>Pseudomonadota</taxon>
        <taxon>Betaproteobacteria</taxon>
        <taxon>Rhodocyclales</taxon>
        <taxon>Rhodocyclaceae</taxon>
        <taxon>Aromatoleum</taxon>
    </lineage>
</organism>
<dbReference type="EMBL" id="CR555306">
    <property type="protein sequence ID" value="CAI08281.1"/>
    <property type="molecule type" value="Genomic_DNA"/>
</dbReference>
<dbReference type="RefSeq" id="WP_011237971.1">
    <property type="nucleotide sequence ID" value="NC_006513.1"/>
</dbReference>
<dbReference type="SMR" id="Q5P333"/>
<dbReference type="STRING" id="76114.ebB124"/>
<dbReference type="KEGG" id="eba:ebB124"/>
<dbReference type="eggNOG" id="COG0051">
    <property type="taxonomic scope" value="Bacteria"/>
</dbReference>
<dbReference type="HOGENOM" id="CLU_122625_1_3_4"/>
<dbReference type="OrthoDB" id="9804464at2"/>
<dbReference type="Proteomes" id="UP000006552">
    <property type="component" value="Chromosome"/>
</dbReference>
<dbReference type="GO" id="GO:1990904">
    <property type="term" value="C:ribonucleoprotein complex"/>
    <property type="evidence" value="ECO:0007669"/>
    <property type="project" value="UniProtKB-KW"/>
</dbReference>
<dbReference type="GO" id="GO:0005840">
    <property type="term" value="C:ribosome"/>
    <property type="evidence" value="ECO:0007669"/>
    <property type="project" value="UniProtKB-KW"/>
</dbReference>
<dbReference type="GO" id="GO:0003735">
    <property type="term" value="F:structural constituent of ribosome"/>
    <property type="evidence" value="ECO:0007669"/>
    <property type="project" value="InterPro"/>
</dbReference>
<dbReference type="GO" id="GO:0000049">
    <property type="term" value="F:tRNA binding"/>
    <property type="evidence" value="ECO:0007669"/>
    <property type="project" value="UniProtKB-UniRule"/>
</dbReference>
<dbReference type="GO" id="GO:0006412">
    <property type="term" value="P:translation"/>
    <property type="evidence" value="ECO:0007669"/>
    <property type="project" value="UniProtKB-UniRule"/>
</dbReference>
<dbReference type="FunFam" id="3.30.70.600:FF:000001">
    <property type="entry name" value="30S ribosomal protein S10"/>
    <property type="match status" value="1"/>
</dbReference>
<dbReference type="Gene3D" id="3.30.70.600">
    <property type="entry name" value="Ribosomal protein S10 domain"/>
    <property type="match status" value="1"/>
</dbReference>
<dbReference type="HAMAP" id="MF_00508">
    <property type="entry name" value="Ribosomal_uS10"/>
    <property type="match status" value="1"/>
</dbReference>
<dbReference type="InterPro" id="IPR001848">
    <property type="entry name" value="Ribosomal_uS10"/>
</dbReference>
<dbReference type="InterPro" id="IPR018268">
    <property type="entry name" value="Ribosomal_uS10_CS"/>
</dbReference>
<dbReference type="InterPro" id="IPR027486">
    <property type="entry name" value="Ribosomal_uS10_dom"/>
</dbReference>
<dbReference type="InterPro" id="IPR036838">
    <property type="entry name" value="Ribosomal_uS10_dom_sf"/>
</dbReference>
<dbReference type="NCBIfam" id="NF001861">
    <property type="entry name" value="PRK00596.1"/>
    <property type="match status" value="1"/>
</dbReference>
<dbReference type="NCBIfam" id="TIGR01049">
    <property type="entry name" value="rpsJ_bact"/>
    <property type="match status" value="1"/>
</dbReference>
<dbReference type="PANTHER" id="PTHR11700">
    <property type="entry name" value="30S RIBOSOMAL PROTEIN S10 FAMILY MEMBER"/>
    <property type="match status" value="1"/>
</dbReference>
<dbReference type="Pfam" id="PF00338">
    <property type="entry name" value="Ribosomal_S10"/>
    <property type="match status" value="1"/>
</dbReference>
<dbReference type="PRINTS" id="PR00971">
    <property type="entry name" value="RIBOSOMALS10"/>
</dbReference>
<dbReference type="SMART" id="SM01403">
    <property type="entry name" value="Ribosomal_S10"/>
    <property type="match status" value="1"/>
</dbReference>
<dbReference type="SUPFAM" id="SSF54999">
    <property type="entry name" value="Ribosomal protein S10"/>
    <property type="match status" value="1"/>
</dbReference>
<dbReference type="PROSITE" id="PS00361">
    <property type="entry name" value="RIBOSOMAL_S10"/>
    <property type="match status" value="1"/>
</dbReference>
<comment type="function">
    <text evidence="1">Involved in the binding of tRNA to the ribosomes.</text>
</comment>
<comment type="subunit">
    <text evidence="1">Part of the 30S ribosomal subunit.</text>
</comment>
<comment type="similarity">
    <text evidence="1">Belongs to the universal ribosomal protein uS10 family.</text>
</comment>
<accession>Q5P333</accession>
<evidence type="ECO:0000255" key="1">
    <source>
        <dbReference type="HAMAP-Rule" id="MF_00508"/>
    </source>
</evidence>
<evidence type="ECO:0000305" key="2"/>
<proteinExistence type="inferred from homology"/>
<feature type="chain" id="PRO_0000237012" description="Small ribosomal subunit protein uS10">
    <location>
        <begin position="1"/>
        <end position="103"/>
    </location>
</feature>